<accession>Q0AHS7</accession>
<sequence length="127" mass="14058">MKNDQKYDIKVQVRTTYLQDQSDPAQEQYVFAYTITINNIGSVASQLVSRHWIITGGDGETREVRGLGVVGEQPLLKPGESFEYTSGTAISSIAGSMKGSYQMVAEDGFHFSVEIPEFILSVPRVLH</sequence>
<name>APAG_NITEC</name>
<gene>
    <name evidence="1" type="primary">apaG</name>
    <name type="ordered locus">Neut_0842</name>
</gene>
<feature type="chain" id="PRO_1000083627" description="Protein ApaG">
    <location>
        <begin position="1"/>
        <end position="127"/>
    </location>
</feature>
<feature type="domain" description="ApaG" evidence="1">
    <location>
        <begin position="3"/>
        <end position="127"/>
    </location>
</feature>
<protein>
    <recommendedName>
        <fullName evidence="1">Protein ApaG</fullName>
    </recommendedName>
</protein>
<organism>
    <name type="scientific">Nitrosomonas eutropha (strain DSM 101675 / C91 / Nm57)</name>
    <dbReference type="NCBI Taxonomy" id="335283"/>
    <lineage>
        <taxon>Bacteria</taxon>
        <taxon>Pseudomonadati</taxon>
        <taxon>Pseudomonadota</taxon>
        <taxon>Betaproteobacteria</taxon>
        <taxon>Nitrosomonadales</taxon>
        <taxon>Nitrosomonadaceae</taxon>
        <taxon>Nitrosomonas</taxon>
    </lineage>
</organism>
<reference key="1">
    <citation type="journal article" date="2007" name="Environ. Microbiol.">
        <title>Whole-genome analysis of the ammonia-oxidizing bacterium, Nitrosomonas eutropha C91: implications for niche adaptation.</title>
        <authorList>
            <person name="Stein L.Y."/>
            <person name="Arp D.J."/>
            <person name="Berube P.M."/>
            <person name="Chain P.S."/>
            <person name="Hauser L."/>
            <person name="Jetten M.S."/>
            <person name="Klotz M.G."/>
            <person name="Larimer F.W."/>
            <person name="Norton J.M."/>
            <person name="Op den Camp H.J.M."/>
            <person name="Shin M."/>
            <person name="Wei X."/>
        </authorList>
    </citation>
    <scope>NUCLEOTIDE SEQUENCE [LARGE SCALE GENOMIC DNA]</scope>
    <source>
        <strain>DSM 101675 / C91 / Nm57</strain>
    </source>
</reference>
<dbReference type="EMBL" id="CP000450">
    <property type="protein sequence ID" value="ABI59105.1"/>
    <property type="molecule type" value="Genomic_DNA"/>
</dbReference>
<dbReference type="RefSeq" id="WP_011633930.1">
    <property type="nucleotide sequence ID" value="NC_008344.1"/>
</dbReference>
<dbReference type="SMR" id="Q0AHS7"/>
<dbReference type="STRING" id="335283.Neut_0842"/>
<dbReference type="KEGG" id="net:Neut_0842"/>
<dbReference type="eggNOG" id="COG2967">
    <property type="taxonomic scope" value="Bacteria"/>
</dbReference>
<dbReference type="HOGENOM" id="CLU_128074_0_0_4"/>
<dbReference type="OrthoDB" id="9795226at2"/>
<dbReference type="Proteomes" id="UP000001966">
    <property type="component" value="Chromosome"/>
</dbReference>
<dbReference type="Gene3D" id="2.60.40.1470">
    <property type="entry name" value="ApaG domain"/>
    <property type="match status" value="1"/>
</dbReference>
<dbReference type="HAMAP" id="MF_00791">
    <property type="entry name" value="ApaG"/>
    <property type="match status" value="1"/>
</dbReference>
<dbReference type="InterPro" id="IPR050718">
    <property type="entry name" value="ApaG-like"/>
</dbReference>
<dbReference type="InterPro" id="IPR007474">
    <property type="entry name" value="ApaG_domain"/>
</dbReference>
<dbReference type="InterPro" id="IPR036767">
    <property type="entry name" value="ApaG_sf"/>
</dbReference>
<dbReference type="InterPro" id="IPR023065">
    <property type="entry name" value="Uncharacterised_ApaG"/>
</dbReference>
<dbReference type="NCBIfam" id="NF003967">
    <property type="entry name" value="PRK05461.1"/>
    <property type="match status" value="1"/>
</dbReference>
<dbReference type="PANTHER" id="PTHR47191">
    <property type="entry name" value="OS05G0170800 PROTEIN"/>
    <property type="match status" value="1"/>
</dbReference>
<dbReference type="PANTHER" id="PTHR47191:SF2">
    <property type="entry name" value="OS05G0170800 PROTEIN"/>
    <property type="match status" value="1"/>
</dbReference>
<dbReference type="Pfam" id="PF04379">
    <property type="entry name" value="DUF525"/>
    <property type="match status" value="1"/>
</dbReference>
<dbReference type="SUPFAM" id="SSF110069">
    <property type="entry name" value="ApaG-like"/>
    <property type="match status" value="1"/>
</dbReference>
<dbReference type="PROSITE" id="PS51087">
    <property type="entry name" value="APAG"/>
    <property type="match status" value="1"/>
</dbReference>
<evidence type="ECO:0000255" key="1">
    <source>
        <dbReference type="HAMAP-Rule" id="MF_00791"/>
    </source>
</evidence>
<proteinExistence type="inferred from homology"/>